<evidence type="ECO:0000255" key="1">
    <source>
        <dbReference type="HAMAP-Rule" id="MF_01264"/>
    </source>
</evidence>
<evidence type="ECO:0000269" key="2">
    <source>
    </source>
</evidence>
<evidence type="ECO:0000269" key="3">
    <source>
    </source>
</evidence>
<evidence type="ECO:0000269" key="4">
    <source>
    </source>
</evidence>
<evidence type="ECO:0000303" key="5">
    <source>
    </source>
</evidence>
<evidence type="ECO:0000305" key="6"/>
<evidence type="ECO:0000305" key="7">
    <source>
    </source>
</evidence>
<evidence type="ECO:0007744" key="8">
    <source>
        <dbReference type="PDB" id="1R89"/>
    </source>
</evidence>
<evidence type="ECO:0007744" key="9">
    <source>
        <dbReference type="PDB" id="1R8A"/>
    </source>
</evidence>
<evidence type="ECO:0007744" key="10">
    <source>
        <dbReference type="PDB" id="1R8B"/>
    </source>
</evidence>
<evidence type="ECO:0007744" key="11">
    <source>
        <dbReference type="PDB" id="1R8C"/>
    </source>
</evidence>
<evidence type="ECO:0007744" key="12">
    <source>
        <dbReference type="PDB" id="1SZ1"/>
    </source>
</evidence>
<evidence type="ECO:0007744" key="13">
    <source>
        <dbReference type="PDB" id="1TFW"/>
    </source>
</evidence>
<evidence type="ECO:0007744" key="14">
    <source>
        <dbReference type="PDB" id="1TFY"/>
    </source>
</evidence>
<evidence type="ECO:0007744" key="15">
    <source>
        <dbReference type="PDB" id="1UET"/>
    </source>
</evidence>
<evidence type="ECO:0007744" key="16">
    <source>
        <dbReference type="PDB" id="1UEU"/>
    </source>
</evidence>
<evidence type="ECO:0007744" key="17">
    <source>
        <dbReference type="PDB" id="1UEV"/>
    </source>
</evidence>
<evidence type="ECO:0007744" key="18">
    <source>
        <dbReference type="PDB" id="4X4N"/>
    </source>
</evidence>
<evidence type="ECO:0007744" key="19">
    <source>
        <dbReference type="PDB" id="4X4O"/>
    </source>
</evidence>
<evidence type="ECO:0007744" key="20">
    <source>
        <dbReference type="PDB" id="4X4P"/>
    </source>
</evidence>
<evidence type="ECO:0007744" key="21">
    <source>
        <dbReference type="PDB" id="4X4Q"/>
    </source>
</evidence>
<evidence type="ECO:0007744" key="22">
    <source>
        <dbReference type="PDB" id="4X4R"/>
    </source>
</evidence>
<evidence type="ECO:0007744" key="23">
    <source>
        <dbReference type="PDB" id="4X4S"/>
    </source>
</evidence>
<evidence type="ECO:0007744" key="24">
    <source>
        <dbReference type="PDB" id="4X4T"/>
    </source>
</evidence>
<evidence type="ECO:0007744" key="25">
    <source>
        <dbReference type="PDB" id="4X4U"/>
    </source>
</evidence>
<evidence type="ECO:0007744" key="26">
    <source>
        <dbReference type="PDB" id="4X4V"/>
    </source>
</evidence>
<evidence type="ECO:0007829" key="27">
    <source>
        <dbReference type="PDB" id="1R89"/>
    </source>
</evidence>
<evidence type="ECO:0007829" key="28">
    <source>
        <dbReference type="PDB" id="3OUY"/>
    </source>
</evidence>
<evidence type="ECO:0007829" key="29">
    <source>
        <dbReference type="PDB" id="4X4T"/>
    </source>
</evidence>
<reference key="1">
    <citation type="journal article" date="1997" name="Nature">
        <title>The complete genome sequence of the hyperthermophilic, sulphate-reducing archaeon Archaeoglobus fulgidus.</title>
        <authorList>
            <person name="Klenk H.-P."/>
            <person name="Clayton R.A."/>
            <person name="Tomb J.-F."/>
            <person name="White O."/>
            <person name="Nelson K.E."/>
            <person name="Ketchum K.A."/>
            <person name="Dodson R.J."/>
            <person name="Gwinn M.L."/>
            <person name="Hickey E.K."/>
            <person name="Peterson J.D."/>
            <person name="Richardson D.L."/>
            <person name="Kerlavage A.R."/>
            <person name="Graham D.E."/>
            <person name="Kyrpides N.C."/>
            <person name="Fleischmann R.D."/>
            <person name="Quackenbush J."/>
            <person name="Lee N.H."/>
            <person name="Sutton G.G."/>
            <person name="Gill S.R."/>
            <person name="Kirkness E.F."/>
            <person name="Dougherty B.A."/>
            <person name="McKenney K."/>
            <person name="Adams M.D."/>
            <person name="Loftus B.J."/>
            <person name="Peterson S.N."/>
            <person name="Reich C.I."/>
            <person name="McNeil L.K."/>
            <person name="Badger J.H."/>
            <person name="Glodek A."/>
            <person name="Zhou L."/>
            <person name="Overbeek R."/>
            <person name="Gocayne J.D."/>
            <person name="Weidman J.F."/>
            <person name="McDonald L.A."/>
            <person name="Utterback T.R."/>
            <person name="Cotton M.D."/>
            <person name="Spriggs T."/>
            <person name="Artiach P."/>
            <person name="Kaine B.P."/>
            <person name="Sykes S.M."/>
            <person name="Sadow P.W."/>
            <person name="D'Andrea K.P."/>
            <person name="Bowman C."/>
            <person name="Fujii C."/>
            <person name="Garland S.A."/>
            <person name="Mason T.M."/>
            <person name="Olsen G.J."/>
            <person name="Fraser C.M."/>
            <person name="Smith H.O."/>
            <person name="Woese C.R."/>
            <person name="Venter J.C."/>
        </authorList>
    </citation>
    <scope>NUCLEOTIDE SEQUENCE [LARGE SCALE GENOMIC DNA]</scope>
    <source>
        <strain>ATCC 49558 / DSM 4304 / JCM 9628 / NBRC 100126 / VC-16</strain>
    </source>
</reference>
<reference evidence="15 16 17" key="2">
    <citation type="journal article" date="2003" name="EMBO J.">
        <title>Divergent evolutions of trinucleotide polymerization revealed by an archaeal CCA-adding enzyme structure.</title>
        <authorList>
            <person name="Okabe M."/>
            <person name="Tomita K."/>
            <person name="Ishitani R."/>
            <person name="Ishii R."/>
            <person name="Takeuchi N."/>
            <person name="Arisaka F."/>
            <person name="Nureki O."/>
            <person name="Yokoyama S."/>
        </authorList>
    </citation>
    <scope>X-RAY CRYSTALLOGRAPHY (2.0 ANGSTROMS) OF NATIVE PROTEIN AND COMPLEXES WITH ATP; CTP AND MAGNESIUM</scope>
    <scope>FUNCTION</scope>
    <scope>CATALYTIC ACTIVITY</scope>
    <scope>SUBUNIT</scope>
    <scope>MUTAGENESIS OF ARG-50; ASP-110 AND HIS-133</scope>
</reference>
<reference evidence="8 9 10 11" key="3">
    <citation type="journal article" date="2003" name="Mol. Cell">
        <title>Crystal structures of an archaeal class I CCA-adding enzyme and its nucleotide complexes.</title>
        <authorList>
            <person name="Xiong Y."/>
            <person name="Li F."/>
            <person name="Wang J."/>
            <person name="Weiner A.M."/>
            <person name="Steitz T.A."/>
        </authorList>
    </citation>
    <scope>X-RAY CRYSTALLOGRAPHY (1.8 ANGSTROMS) OF NATIVE PROTEIN AND COMPLEXES WITH ATP; CTP; UTP AND MAGNESIUM</scope>
    <scope>SUBUNIT</scope>
</reference>
<reference evidence="12 13 14" key="4">
    <citation type="journal article" date="2004" name="Nature">
        <title>Mechanism of transfer RNA maturation by CCA-adding enzyme without using an oligonucleotide template.</title>
        <authorList>
            <person name="Xiong Y."/>
            <person name="Steitz T.A."/>
        </authorList>
    </citation>
    <scope>X-RAY CRYSTALLOGRAPHY (2.2 ANGSTROMS) OF COMPLEX WITH TRNA AND OF COMPLEXES WITH SYNTHETIC RNA DUPLEXES ENDING WITH THE OLIGONUCLEOTIDES C74 AND C75</scope>
</reference>
<reference evidence="18 19 20 21 22 23 24 25 26" key="5">
    <citation type="journal article" date="2015" name="Cell">
        <title>On-enzyme refolding permits small RNA and tRNA surveillance by the CCA-adding enzyme.</title>
        <authorList>
            <person name="Kuhn C.D."/>
            <person name="Wilusz J.E."/>
            <person name="Zheng Y."/>
            <person name="Beal P.A."/>
            <person name="Joshua-Tor L."/>
        </authorList>
    </citation>
    <scope>X-RAY CRYSTALLOGRAPHY (2.50 ANGSTROMS) IN COMPLEX WITH CTP</scope>
    <scope>FUNCTION</scope>
    <scope>CATALYTIC ACTIVITY</scope>
    <scope>MUTAGENESIS OF 299-ARG--ARG-302</scope>
</reference>
<feature type="chain" id="PRO_0000139065" description="CCA-adding enzyme">
    <location>
        <begin position="1"/>
        <end position="437"/>
    </location>
</feature>
<feature type="binding site" evidence="2 3 10 17">
    <location>
        <position position="47"/>
    </location>
    <ligand>
        <name>ATP</name>
        <dbReference type="ChEBI" id="CHEBI:30616"/>
    </ligand>
</feature>
<feature type="binding site" evidence="2 3 4 8 16 19 21 23">
    <location>
        <position position="47"/>
    </location>
    <ligand>
        <name>CTP</name>
        <dbReference type="ChEBI" id="CHEBI:37563"/>
    </ligand>
</feature>
<feature type="binding site" evidence="2 3 10 17">
    <location>
        <position position="50"/>
    </location>
    <ligand>
        <name>ATP</name>
        <dbReference type="ChEBI" id="CHEBI:30616"/>
    </ligand>
</feature>
<feature type="binding site" evidence="2 3 4 8 16 21 23">
    <location>
        <position position="50"/>
    </location>
    <ligand>
        <name>CTP</name>
        <dbReference type="ChEBI" id="CHEBI:37563"/>
    </ligand>
</feature>
<feature type="binding site" evidence="2 17">
    <location>
        <position position="59"/>
    </location>
    <ligand>
        <name>Mg(2+)</name>
        <dbReference type="ChEBI" id="CHEBI:18420"/>
    </ligand>
</feature>
<feature type="binding site" evidence="2 8 17">
    <location>
        <position position="61"/>
    </location>
    <ligand>
        <name>Mg(2+)</name>
        <dbReference type="ChEBI" id="CHEBI:18420"/>
    </ligand>
</feature>
<feature type="binding site" evidence="2 8 17">
    <location>
        <position position="110"/>
    </location>
    <ligand>
        <name>Mg(2+)</name>
        <dbReference type="ChEBI" id="CHEBI:18420"/>
    </ligand>
</feature>
<feature type="binding site" evidence="2 3 10 17">
    <location>
        <position position="133"/>
    </location>
    <ligand>
        <name>ATP</name>
        <dbReference type="ChEBI" id="CHEBI:30616"/>
    </ligand>
</feature>
<feature type="binding site" evidence="2 3 4 8 16 21 23">
    <location>
        <position position="133"/>
    </location>
    <ligand>
        <name>CTP</name>
        <dbReference type="ChEBI" id="CHEBI:37563"/>
    </ligand>
</feature>
<feature type="binding site" evidence="2 3 10 17">
    <location>
        <position position="152"/>
    </location>
    <ligand>
        <name>ATP</name>
        <dbReference type="ChEBI" id="CHEBI:30616"/>
    </ligand>
</feature>
<feature type="binding site" evidence="2 3 4 8 16 21 23">
    <location>
        <position position="152"/>
    </location>
    <ligand>
        <name>CTP</name>
        <dbReference type="ChEBI" id="CHEBI:37563"/>
    </ligand>
</feature>
<feature type="binding site" evidence="2 3 10 17">
    <location>
        <position position="161"/>
    </location>
    <ligand>
        <name>ATP</name>
        <dbReference type="ChEBI" id="CHEBI:30616"/>
    </ligand>
</feature>
<feature type="binding site" evidence="2 3 4 8 16 21 23">
    <location>
        <position position="161"/>
    </location>
    <ligand>
        <name>CTP</name>
        <dbReference type="ChEBI" id="CHEBI:37563"/>
    </ligand>
</feature>
<feature type="mutagenesis site" description="High decrease in both AMP and CMP incorporation." evidence="2">
    <original>R</original>
    <variation>A</variation>
    <location>
        <position position="50"/>
    </location>
</feature>
<feature type="mutagenesis site" description="High decrease in both AMP and CMP incorporation." evidence="2">
    <original>D</original>
    <variation>A</variation>
    <location>
        <position position="110"/>
    </location>
</feature>
<feature type="mutagenesis site" description="No decrease in both AMP and CMP incorporation." evidence="2">
    <original>H</original>
    <variation>A</variation>
    <location>
        <position position="133"/>
    </location>
</feature>
<feature type="mutagenesis site" description="Does not affect the CCA tRNA nucleotidyltransferase activity, while the CCACCA tRNA nucleotidyltransferase activity is strongly reduced." evidence="4">
    <original>RASR</original>
    <variation>AASA</variation>
    <location>
        <begin position="299"/>
        <end position="302"/>
    </location>
</feature>
<feature type="helix" evidence="27">
    <location>
        <begin position="3"/>
        <end position="14"/>
    </location>
</feature>
<feature type="helix" evidence="27">
    <location>
        <begin position="18"/>
        <end position="38"/>
    </location>
</feature>
<feature type="strand" evidence="27">
    <location>
        <begin position="42"/>
        <end position="45"/>
    </location>
</feature>
<feature type="helix" evidence="27">
    <location>
        <begin position="46"/>
        <end position="49"/>
    </location>
</feature>
<feature type="strand" evidence="27">
    <location>
        <begin position="59"/>
        <end position="66"/>
    </location>
</feature>
<feature type="strand" evidence="29">
    <location>
        <begin position="68"/>
        <end position="70"/>
    </location>
</feature>
<feature type="helix" evidence="27">
    <location>
        <begin position="72"/>
        <end position="86"/>
    </location>
</feature>
<feature type="strand" evidence="27">
    <location>
        <begin position="87"/>
        <end position="104"/>
    </location>
</feature>
<feature type="strand" evidence="27">
    <location>
        <begin position="107"/>
        <end position="115"/>
    </location>
</feature>
<feature type="strand" evidence="27">
    <location>
        <begin position="118"/>
        <end position="121"/>
    </location>
</feature>
<feature type="helix" evidence="27">
    <location>
        <begin position="126"/>
        <end position="137"/>
    </location>
</feature>
<feature type="turn" evidence="27">
    <location>
        <begin position="138"/>
        <end position="140"/>
    </location>
</feature>
<feature type="turn" evidence="28">
    <location>
        <begin position="142"/>
        <end position="144"/>
    </location>
</feature>
<feature type="helix" evidence="27">
    <location>
        <begin position="145"/>
        <end position="157"/>
    </location>
</feature>
<feature type="turn" evidence="27">
    <location>
        <begin position="165"/>
        <end position="167"/>
    </location>
</feature>
<feature type="helix" evidence="27">
    <location>
        <begin position="172"/>
        <end position="182"/>
    </location>
</feature>
<feature type="helix" evidence="27">
    <location>
        <begin position="185"/>
        <end position="192"/>
    </location>
</feature>
<feature type="strand" evidence="27">
    <location>
        <begin position="199"/>
        <end position="202"/>
    </location>
</feature>
<feature type="helix" evidence="27">
    <location>
        <begin position="203"/>
        <end position="205"/>
    </location>
</feature>
<feature type="strand" evidence="27">
    <location>
        <begin position="207"/>
        <end position="210"/>
    </location>
</feature>
<feature type="strand" evidence="27">
    <location>
        <begin position="215"/>
        <end position="218"/>
    </location>
</feature>
<feature type="strand" evidence="27">
    <location>
        <begin position="221"/>
        <end position="225"/>
    </location>
</feature>
<feature type="turn" evidence="27">
    <location>
        <begin position="226"/>
        <end position="229"/>
    </location>
</feature>
<feature type="helix" evidence="27">
    <location>
        <begin position="232"/>
        <end position="247"/>
    </location>
</feature>
<feature type="helix" evidence="27">
    <location>
        <begin position="251"/>
        <end position="254"/>
    </location>
</feature>
<feature type="helix" evidence="27">
    <location>
        <begin position="264"/>
        <end position="274"/>
    </location>
</feature>
<feature type="strand" evidence="27">
    <location>
        <begin position="277"/>
        <end position="284"/>
    </location>
</feature>
<feature type="helix" evidence="27">
    <location>
        <begin position="290"/>
        <end position="310"/>
    </location>
</feature>
<feature type="strand" evidence="27">
    <location>
        <begin position="315"/>
        <end position="322"/>
    </location>
</feature>
<feature type="strand" evidence="27">
    <location>
        <begin position="324"/>
        <end position="334"/>
    </location>
</feature>
<feature type="strand" evidence="27">
    <location>
        <begin position="340"/>
        <end position="348"/>
    </location>
</feature>
<feature type="helix" evidence="27">
    <location>
        <begin position="352"/>
        <end position="360"/>
    </location>
</feature>
<feature type="strand" evidence="27">
    <location>
        <begin position="368"/>
        <end position="370"/>
    </location>
</feature>
<feature type="strand" evidence="27">
    <location>
        <begin position="373"/>
        <end position="379"/>
    </location>
</feature>
<feature type="helix" evidence="27">
    <location>
        <begin position="385"/>
        <end position="395"/>
    </location>
</feature>
<feature type="helix" evidence="27">
    <location>
        <begin position="397"/>
        <end position="399"/>
    </location>
</feature>
<feature type="helix" evidence="27">
    <location>
        <begin position="402"/>
        <end position="410"/>
    </location>
</feature>
<feature type="strand" evidence="27">
    <location>
        <begin position="413"/>
        <end position="416"/>
    </location>
</feature>
<feature type="helix" evidence="27">
    <location>
        <begin position="418"/>
        <end position="422"/>
    </location>
</feature>
<feature type="helix" evidence="27">
    <location>
        <begin position="426"/>
        <end position="433"/>
    </location>
</feature>
<gene>
    <name evidence="1" type="primary">cca</name>
    <name type="ordered locus">AF_2156</name>
</gene>
<name>CCA_ARCFU</name>
<accession>O28126</accession>
<protein>
    <recommendedName>
        <fullName evidence="1 5">CCA-adding enzyme</fullName>
        <ecNumber evidence="1 2 4">2.7.7.72</ecNumber>
    </recommendedName>
    <alternativeName>
        <fullName evidence="1">CCA tRNA nucleotidyltransferase</fullName>
    </alternativeName>
    <alternativeName>
        <fullName evidence="1">tRNA CCA-pyrophosphorylase</fullName>
    </alternativeName>
    <alternativeName>
        <fullName evidence="1">tRNA adenylyl-/cytidylyl- transferase</fullName>
    </alternativeName>
    <alternativeName>
        <fullName evidence="1">tRNA nucleotidyltransferase</fullName>
    </alternativeName>
    <alternativeName>
        <fullName evidence="1">tRNA-NT</fullName>
    </alternativeName>
</protein>
<comment type="function">
    <text evidence="2 4">Catalyzes the addition and repair of the essential 3'-terminal CCA sequence in tRNAs without using a nucleic acid template (PubMed:14592988, PubMed:25640237). Adds these three nucleotides in the order of C, C, and A to the tRNA nucleotide-73, using CTP and ATP as substrates and producing inorganic pyrophosphate (PubMed:14592988, PubMed:25640237). tRNA 3'-terminal CCA addition is required both for tRNA processing and repair (PubMed:25640237). Also involved in tRNA surveillance by mediating tandem CCA addition to generate a CCACCA at the 3' terminus of unstable tRNAs (PubMed:25640237). While stable tRNAs receive only 3'-terminal CCA, unstable tRNAs are marked with CCACCA and rapidly degraded (PubMed:25640237). The structural flexibility of RNA controls the choice between CCA versus CCACCA addition: following the first CCA addition cycle, nucleotide-binding to the active site triggers a clockwise screw motion, producing torque on the RNA (PubMed:25640237). This ejects stable RNAs, whereas unstable RNAs are refolded while bound to the enzyme and subjected to a second CCA catalytic cycle (PubMed:25640237).</text>
</comment>
<comment type="catalytic activity">
    <reaction evidence="2 4">
        <text>a tRNA precursor + 2 CTP + ATP = a tRNA with a 3' CCA end + 3 diphosphate</text>
        <dbReference type="Rhea" id="RHEA:14433"/>
        <dbReference type="Rhea" id="RHEA-COMP:10465"/>
        <dbReference type="Rhea" id="RHEA-COMP:10468"/>
        <dbReference type="ChEBI" id="CHEBI:30616"/>
        <dbReference type="ChEBI" id="CHEBI:33019"/>
        <dbReference type="ChEBI" id="CHEBI:37563"/>
        <dbReference type="ChEBI" id="CHEBI:74896"/>
        <dbReference type="ChEBI" id="CHEBI:83071"/>
        <dbReference type="EC" id="2.7.7.72"/>
    </reaction>
    <physiologicalReaction direction="left-to-right" evidence="2 4">
        <dbReference type="Rhea" id="RHEA:14434"/>
    </physiologicalReaction>
</comment>
<comment type="catalytic activity">
    <reaction evidence="4">
        <text>a tRNA with a 3' CCA end + 2 CTP + ATP = a tRNA with a 3' CCACCA end + 3 diphosphate</text>
        <dbReference type="Rhea" id="RHEA:76235"/>
        <dbReference type="Rhea" id="RHEA-COMP:10468"/>
        <dbReference type="Rhea" id="RHEA-COMP:18655"/>
        <dbReference type="ChEBI" id="CHEBI:30616"/>
        <dbReference type="ChEBI" id="CHEBI:33019"/>
        <dbReference type="ChEBI" id="CHEBI:37563"/>
        <dbReference type="ChEBI" id="CHEBI:83071"/>
        <dbReference type="ChEBI" id="CHEBI:195187"/>
    </reaction>
    <physiologicalReaction direction="left-to-right" evidence="4">
        <dbReference type="Rhea" id="RHEA:76236"/>
    </physiologicalReaction>
</comment>
<comment type="cofactor">
    <cofactor evidence="7">
        <name>Mg(2+)</name>
        <dbReference type="ChEBI" id="CHEBI:18420"/>
    </cofactor>
</comment>
<comment type="subunit">
    <text evidence="2 3">Homodimer.</text>
</comment>
<comment type="miscellaneous">
    <text>A single active site specifically recognizes both ATP and CTP and is responsible for their addition. In contrast to the eubacterial homologs, the specificity of the nucleotide-binding pocket is determined by both the enzyme and the tRNA.</text>
</comment>
<comment type="similarity">
    <text evidence="1 6">Belongs to the tRNA nucleotidyltransferase/poly(A) polymerase family. Archaeal CCA-adding enzyme subfamily.</text>
</comment>
<dbReference type="EC" id="2.7.7.72" evidence="1 2 4"/>
<dbReference type="EMBL" id="AE000782">
    <property type="protein sequence ID" value="AAB89084.1"/>
    <property type="molecule type" value="Genomic_DNA"/>
</dbReference>
<dbReference type="PIR" id="D69519">
    <property type="entry name" value="D69519"/>
</dbReference>
<dbReference type="RefSeq" id="WP_010879645.1">
    <property type="nucleotide sequence ID" value="NC_000917.1"/>
</dbReference>
<dbReference type="PDB" id="1R89">
    <property type="method" value="X-ray"/>
    <property type="resolution" value="1.80 A"/>
    <property type="chains" value="A=1-437"/>
</dbReference>
<dbReference type="PDB" id="1R8A">
    <property type="method" value="X-ray"/>
    <property type="resolution" value="2.10 A"/>
    <property type="chains" value="A=1-437"/>
</dbReference>
<dbReference type="PDB" id="1R8B">
    <property type="method" value="X-ray"/>
    <property type="resolution" value="2.00 A"/>
    <property type="chains" value="A=1-437"/>
</dbReference>
<dbReference type="PDB" id="1R8C">
    <property type="method" value="X-ray"/>
    <property type="resolution" value="1.90 A"/>
    <property type="chains" value="A=1-437"/>
</dbReference>
<dbReference type="PDB" id="1SZ1">
    <property type="method" value="X-ray"/>
    <property type="resolution" value="6.21 A"/>
    <property type="chains" value="A/B=1-437"/>
</dbReference>
<dbReference type="PDB" id="1TFW">
    <property type="method" value="X-ray"/>
    <property type="resolution" value="2.20 A"/>
    <property type="chains" value="A/B/C/D=1-437"/>
</dbReference>
<dbReference type="PDB" id="1TFY">
    <property type="method" value="X-ray"/>
    <property type="resolution" value="3.20 A"/>
    <property type="chains" value="A/B/C/D=1-437"/>
</dbReference>
<dbReference type="PDB" id="1UET">
    <property type="method" value="X-ray"/>
    <property type="resolution" value="2.00 A"/>
    <property type="chains" value="A=1-437"/>
</dbReference>
<dbReference type="PDB" id="1UEU">
    <property type="method" value="X-ray"/>
    <property type="resolution" value="2.00 A"/>
    <property type="chains" value="A=1-437"/>
</dbReference>
<dbReference type="PDB" id="1UEV">
    <property type="method" value="X-ray"/>
    <property type="resolution" value="2.70 A"/>
    <property type="chains" value="A=1-437"/>
</dbReference>
<dbReference type="PDB" id="2DR5">
    <property type="method" value="X-ray"/>
    <property type="resolution" value="2.80 A"/>
    <property type="chains" value="A=1-437"/>
</dbReference>
<dbReference type="PDB" id="2DR7">
    <property type="method" value="X-ray"/>
    <property type="resolution" value="2.80 A"/>
    <property type="chains" value="A=1-437"/>
</dbReference>
<dbReference type="PDB" id="2DR8">
    <property type="method" value="X-ray"/>
    <property type="resolution" value="2.50 A"/>
    <property type="chains" value="A=1-437"/>
</dbReference>
<dbReference type="PDB" id="2DR9">
    <property type="method" value="X-ray"/>
    <property type="resolution" value="2.80 A"/>
    <property type="chains" value="A=1-437"/>
</dbReference>
<dbReference type="PDB" id="2DRA">
    <property type="method" value="X-ray"/>
    <property type="resolution" value="2.50 A"/>
    <property type="chains" value="A=1-437"/>
</dbReference>
<dbReference type="PDB" id="2DRB">
    <property type="method" value="X-ray"/>
    <property type="resolution" value="2.80 A"/>
    <property type="chains" value="A=1-437"/>
</dbReference>
<dbReference type="PDB" id="2DVI">
    <property type="method" value="X-ray"/>
    <property type="resolution" value="2.61 A"/>
    <property type="chains" value="A=1-437"/>
</dbReference>
<dbReference type="PDB" id="2ZH1">
    <property type="method" value="X-ray"/>
    <property type="resolution" value="2.80 A"/>
    <property type="chains" value="A=1-437"/>
</dbReference>
<dbReference type="PDB" id="2ZH2">
    <property type="method" value="X-ray"/>
    <property type="resolution" value="2.66 A"/>
    <property type="chains" value="A=1-437"/>
</dbReference>
<dbReference type="PDB" id="2ZH3">
    <property type="method" value="X-ray"/>
    <property type="resolution" value="2.50 A"/>
    <property type="chains" value="A=1-437"/>
</dbReference>
<dbReference type="PDB" id="2ZH4">
    <property type="method" value="X-ray"/>
    <property type="resolution" value="2.65 A"/>
    <property type="chains" value="A=1-437"/>
</dbReference>
<dbReference type="PDB" id="2ZH5">
    <property type="method" value="X-ray"/>
    <property type="resolution" value="2.60 A"/>
    <property type="chains" value="A=1-437"/>
</dbReference>
<dbReference type="PDB" id="2ZH6">
    <property type="method" value="X-ray"/>
    <property type="resolution" value="2.50 A"/>
    <property type="chains" value="A=1-437"/>
</dbReference>
<dbReference type="PDB" id="2ZH7">
    <property type="method" value="X-ray"/>
    <property type="resolution" value="3.00 A"/>
    <property type="chains" value="A=2-437"/>
</dbReference>
<dbReference type="PDB" id="2ZH8">
    <property type="method" value="X-ray"/>
    <property type="resolution" value="2.65 A"/>
    <property type="chains" value="A=1-437"/>
</dbReference>
<dbReference type="PDB" id="2ZH9">
    <property type="method" value="X-ray"/>
    <property type="resolution" value="2.90 A"/>
    <property type="chains" value="A=1-437"/>
</dbReference>
<dbReference type="PDB" id="2ZHA">
    <property type="method" value="X-ray"/>
    <property type="resolution" value="2.95 A"/>
    <property type="chains" value="A=1-437"/>
</dbReference>
<dbReference type="PDB" id="2ZHB">
    <property type="method" value="X-ray"/>
    <property type="resolution" value="3.05 A"/>
    <property type="chains" value="A=2-437"/>
</dbReference>
<dbReference type="PDB" id="3OUY">
    <property type="method" value="X-ray"/>
    <property type="resolution" value="2.69 A"/>
    <property type="chains" value="A/B=1-437"/>
</dbReference>
<dbReference type="PDB" id="3OV7">
    <property type="method" value="X-ray"/>
    <property type="resolution" value="3.00 A"/>
    <property type="chains" value="A/B=1-437"/>
</dbReference>
<dbReference type="PDB" id="3OVA">
    <property type="method" value="X-ray"/>
    <property type="resolution" value="1.98 A"/>
    <property type="chains" value="A=3-437"/>
</dbReference>
<dbReference type="PDB" id="3OVB">
    <property type="method" value="X-ray"/>
    <property type="resolution" value="1.95 A"/>
    <property type="chains" value="A/B=1-437"/>
</dbReference>
<dbReference type="PDB" id="3OVS">
    <property type="method" value="X-ray"/>
    <property type="resolution" value="2.80 A"/>
    <property type="chains" value="A/B=1-437"/>
</dbReference>
<dbReference type="PDB" id="4X4N">
    <property type="method" value="X-ray"/>
    <property type="resolution" value="2.95 A"/>
    <property type="chains" value="A/C/E/F=1-437"/>
</dbReference>
<dbReference type="PDB" id="4X4O">
    <property type="method" value="X-ray"/>
    <property type="resolution" value="3.20 A"/>
    <property type="chains" value="A/C=1-437"/>
</dbReference>
<dbReference type="PDB" id="4X4P">
    <property type="method" value="X-ray"/>
    <property type="resolution" value="3.00 A"/>
    <property type="chains" value="A/C/E/G=1-437"/>
</dbReference>
<dbReference type="PDB" id="4X4Q">
    <property type="method" value="X-ray"/>
    <property type="resolution" value="3.15 A"/>
    <property type="chains" value="A/C=1-437"/>
</dbReference>
<dbReference type="PDB" id="4X4R">
    <property type="method" value="X-ray"/>
    <property type="resolution" value="3.20 A"/>
    <property type="chains" value="A/C=1-437"/>
</dbReference>
<dbReference type="PDB" id="4X4S">
    <property type="method" value="X-ray"/>
    <property type="resolution" value="3.25 A"/>
    <property type="chains" value="A/C=1-437"/>
</dbReference>
<dbReference type="PDB" id="4X4T">
    <property type="method" value="X-ray"/>
    <property type="resolution" value="2.50 A"/>
    <property type="chains" value="A/C/E/F=1-437"/>
</dbReference>
<dbReference type="PDB" id="4X4U">
    <property type="method" value="X-ray"/>
    <property type="resolution" value="2.70 A"/>
    <property type="chains" value="A/C/E/F=1-437"/>
</dbReference>
<dbReference type="PDB" id="4X4V">
    <property type="method" value="X-ray"/>
    <property type="resolution" value="2.60 A"/>
    <property type="chains" value="A/C=1-437"/>
</dbReference>
<dbReference type="PDBsum" id="1R89"/>
<dbReference type="PDBsum" id="1R8A"/>
<dbReference type="PDBsum" id="1R8B"/>
<dbReference type="PDBsum" id="1R8C"/>
<dbReference type="PDBsum" id="1SZ1"/>
<dbReference type="PDBsum" id="1TFW"/>
<dbReference type="PDBsum" id="1TFY"/>
<dbReference type="PDBsum" id="1UET"/>
<dbReference type="PDBsum" id="1UEU"/>
<dbReference type="PDBsum" id="1UEV"/>
<dbReference type="PDBsum" id="2DR5"/>
<dbReference type="PDBsum" id="2DR7"/>
<dbReference type="PDBsum" id="2DR8"/>
<dbReference type="PDBsum" id="2DR9"/>
<dbReference type="PDBsum" id="2DRA"/>
<dbReference type="PDBsum" id="2DRB"/>
<dbReference type="PDBsum" id="2DVI"/>
<dbReference type="PDBsum" id="2ZH1"/>
<dbReference type="PDBsum" id="2ZH2"/>
<dbReference type="PDBsum" id="2ZH3"/>
<dbReference type="PDBsum" id="2ZH4"/>
<dbReference type="PDBsum" id="2ZH5"/>
<dbReference type="PDBsum" id="2ZH6"/>
<dbReference type="PDBsum" id="2ZH7"/>
<dbReference type="PDBsum" id="2ZH8"/>
<dbReference type="PDBsum" id="2ZH9"/>
<dbReference type="PDBsum" id="2ZHA"/>
<dbReference type="PDBsum" id="2ZHB"/>
<dbReference type="PDBsum" id="3OUY"/>
<dbReference type="PDBsum" id="3OV7"/>
<dbReference type="PDBsum" id="3OVA"/>
<dbReference type="PDBsum" id="3OVB"/>
<dbReference type="PDBsum" id="3OVS"/>
<dbReference type="PDBsum" id="4X4N"/>
<dbReference type="PDBsum" id="4X4O"/>
<dbReference type="PDBsum" id="4X4P"/>
<dbReference type="PDBsum" id="4X4Q"/>
<dbReference type="PDBsum" id="4X4R"/>
<dbReference type="PDBsum" id="4X4S"/>
<dbReference type="PDBsum" id="4X4T"/>
<dbReference type="PDBsum" id="4X4U"/>
<dbReference type="PDBsum" id="4X4V"/>
<dbReference type="SMR" id="O28126"/>
<dbReference type="STRING" id="224325.AF_2156"/>
<dbReference type="PaxDb" id="224325-AF_2156"/>
<dbReference type="EnsemblBacteria" id="AAB89084">
    <property type="protein sequence ID" value="AAB89084"/>
    <property type="gene ID" value="AF_2156"/>
</dbReference>
<dbReference type="GeneID" id="24795903"/>
<dbReference type="KEGG" id="afu:AF_2156"/>
<dbReference type="eggNOG" id="arCOG04249">
    <property type="taxonomic scope" value="Archaea"/>
</dbReference>
<dbReference type="HOGENOM" id="CLU_044679_1_0_2"/>
<dbReference type="OrthoDB" id="7378at2157"/>
<dbReference type="PhylomeDB" id="O28126"/>
<dbReference type="BRENDA" id="2.7.7.72">
    <property type="organism ID" value="414"/>
</dbReference>
<dbReference type="EvolutionaryTrace" id="O28126"/>
<dbReference type="Proteomes" id="UP000002199">
    <property type="component" value="Chromosome"/>
</dbReference>
<dbReference type="GO" id="GO:0005524">
    <property type="term" value="F:ATP binding"/>
    <property type="evidence" value="ECO:0007669"/>
    <property type="project" value="UniProtKB-UniRule"/>
</dbReference>
<dbReference type="GO" id="GO:0004810">
    <property type="term" value="F:CCA tRNA nucleotidyltransferase activity"/>
    <property type="evidence" value="ECO:0007669"/>
    <property type="project" value="UniProtKB-UniRule"/>
</dbReference>
<dbReference type="GO" id="GO:0160016">
    <property type="term" value="F:CCACCA tRNA nucleotidyltransferase activity"/>
    <property type="evidence" value="ECO:0000314"/>
    <property type="project" value="UniProtKB"/>
</dbReference>
<dbReference type="GO" id="GO:0000287">
    <property type="term" value="F:magnesium ion binding"/>
    <property type="evidence" value="ECO:0007669"/>
    <property type="project" value="UniProtKB-UniRule"/>
</dbReference>
<dbReference type="GO" id="GO:0000049">
    <property type="term" value="F:tRNA binding"/>
    <property type="evidence" value="ECO:0007669"/>
    <property type="project" value="UniProtKB-UniRule"/>
</dbReference>
<dbReference type="GO" id="GO:0042245">
    <property type="term" value="P:RNA repair"/>
    <property type="evidence" value="ECO:0007669"/>
    <property type="project" value="UniProtKB-KW"/>
</dbReference>
<dbReference type="GO" id="GO:0001680">
    <property type="term" value="P:tRNA 3'-terminal CCA addition"/>
    <property type="evidence" value="ECO:0007669"/>
    <property type="project" value="UniProtKB-UniRule"/>
</dbReference>
<dbReference type="GO" id="GO:0106354">
    <property type="term" value="P:tRNA surveillance"/>
    <property type="evidence" value="ECO:0000314"/>
    <property type="project" value="UniProtKB"/>
</dbReference>
<dbReference type="CDD" id="cd05400">
    <property type="entry name" value="NT_2-5OAS_ClassI-CCAase"/>
    <property type="match status" value="1"/>
</dbReference>
<dbReference type="Gene3D" id="3.30.70.1550">
    <property type="entry name" value="Archaeal tRNA CCA-adding enzyme catalytic domain"/>
    <property type="match status" value="1"/>
</dbReference>
<dbReference type="Gene3D" id="3.30.460.10">
    <property type="entry name" value="Beta Polymerase, domain 2"/>
    <property type="match status" value="1"/>
</dbReference>
<dbReference type="Gene3D" id="1.10.1410.30">
    <property type="entry name" value="CCA tRNA nucleotidyltransferase, domain 2"/>
    <property type="match status" value="1"/>
</dbReference>
<dbReference type="Gene3D" id="3.30.70.590">
    <property type="entry name" value="Poly(A) polymerase predicted RNA binding domain"/>
    <property type="match status" value="1"/>
</dbReference>
<dbReference type="HAMAP" id="MF_01264">
    <property type="entry name" value="CCA_arch"/>
    <property type="match status" value="1"/>
</dbReference>
<dbReference type="InterPro" id="IPR048833">
    <property type="entry name" value="CAA_C"/>
</dbReference>
<dbReference type="InterPro" id="IPR008229">
    <property type="entry name" value="CCA-adding_arc"/>
</dbReference>
<dbReference type="InterPro" id="IPR042090">
    <property type="entry name" value="CCA_tRNA_nucleotrans_2"/>
</dbReference>
<dbReference type="InterPro" id="IPR006116">
    <property type="entry name" value="NT_2-5OAS_ClassI-CCAase"/>
</dbReference>
<dbReference type="InterPro" id="IPR043519">
    <property type="entry name" value="NT_sf"/>
</dbReference>
<dbReference type="InterPro" id="IPR011068">
    <property type="entry name" value="NuclTrfase_I-like_C"/>
</dbReference>
<dbReference type="InterPro" id="IPR002934">
    <property type="entry name" value="Polymerase_NTP_transf_dom"/>
</dbReference>
<dbReference type="InterPro" id="IPR015329">
    <property type="entry name" value="tRNA_NucTransf2"/>
</dbReference>
<dbReference type="NCBIfam" id="TIGR03671">
    <property type="entry name" value="cca_archaeal"/>
    <property type="match status" value="1"/>
</dbReference>
<dbReference type="PANTHER" id="PTHR39643">
    <property type="entry name" value="CCA-ADDING ENZYME"/>
    <property type="match status" value="1"/>
</dbReference>
<dbReference type="PANTHER" id="PTHR39643:SF1">
    <property type="entry name" value="CCA-ADDING ENZYME"/>
    <property type="match status" value="1"/>
</dbReference>
<dbReference type="Pfam" id="PF21133">
    <property type="entry name" value="CAA_C"/>
    <property type="match status" value="1"/>
</dbReference>
<dbReference type="Pfam" id="PF01909">
    <property type="entry name" value="NTP_transf_2"/>
    <property type="match status" value="1"/>
</dbReference>
<dbReference type="Pfam" id="PF09249">
    <property type="entry name" value="tRNA_NucTransf2"/>
    <property type="match status" value="1"/>
</dbReference>
<dbReference type="PIRSF" id="PIRSF005335">
    <property type="entry name" value="CCA_arch"/>
    <property type="match status" value="1"/>
</dbReference>
<dbReference type="SUPFAM" id="SSF81301">
    <property type="entry name" value="Nucleotidyltransferase"/>
    <property type="match status" value="1"/>
</dbReference>
<dbReference type="SUPFAM" id="SSF55003">
    <property type="entry name" value="PAP/Archaeal CCA-adding enzyme, C-terminal domain"/>
    <property type="match status" value="1"/>
</dbReference>
<dbReference type="SUPFAM" id="SSF81631">
    <property type="entry name" value="PAP/OAS1 substrate-binding domain"/>
    <property type="match status" value="1"/>
</dbReference>
<proteinExistence type="evidence at protein level"/>
<sequence length="437" mass="51385">MKVEEILEKALELVIPDEEEVRKGREAEEELRRRLDELGVEYVFVGSYARNTWLKGSLEIDVFLLFPEEFSKEELRERGLEIGKAVLDSYEIRYAEHPYVHGVVKGVEVDVVPCYKLKEPKNIKSAVDRTPFHHKWLEGRIKGKENEVRLLKGFLKANGIYGAEYKVRGFSGYLCELLIVFYGSFLETVKNARRWTRRTVIDVAKGEVRKGEEFFVVDPVDEKRNVAANLSLDNLARFVHLCREFMEAPSLGFFKPKHPLEIEPERLRKIVEERGTAVFAVKFRKPDIVDDNLYPQLERASRKIFEFLERENFMPLRSAFKASEEFCYLLFECQIKEISRVFRRMGPQFEDERNVKKFLSRNRAFRPFIENGRWWAFEMRKFTTPEEGVRSYASTHWHTLGKNVGESIREYFEIISGEKLFKEPVTAELCEMMGVKD</sequence>
<organism>
    <name type="scientific">Archaeoglobus fulgidus (strain ATCC 49558 / DSM 4304 / JCM 9628 / NBRC 100126 / VC-16)</name>
    <dbReference type="NCBI Taxonomy" id="224325"/>
    <lineage>
        <taxon>Archaea</taxon>
        <taxon>Methanobacteriati</taxon>
        <taxon>Methanobacteriota</taxon>
        <taxon>Archaeoglobi</taxon>
        <taxon>Archaeoglobales</taxon>
        <taxon>Archaeoglobaceae</taxon>
        <taxon>Archaeoglobus</taxon>
    </lineage>
</organism>
<keyword id="KW-0002">3D-structure</keyword>
<keyword id="KW-0067">ATP-binding</keyword>
<keyword id="KW-0460">Magnesium</keyword>
<keyword id="KW-0479">Metal-binding</keyword>
<keyword id="KW-0547">Nucleotide-binding</keyword>
<keyword id="KW-0548">Nucleotidyltransferase</keyword>
<keyword id="KW-1185">Reference proteome</keyword>
<keyword id="KW-0692">RNA repair</keyword>
<keyword id="KW-0694">RNA-binding</keyword>
<keyword id="KW-0808">Transferase</keyword>
<keyword id="KW-0819">tRNA processing</keyword>